<reference key="1">
    <citation type="journal article" date="2009" name="PLoS Genet.">
        <title>Organised genome dynamics in the Escherichia coli species results in highly diverse adaptive paths.</title>
        <authorList>
            <person name="Touchon M."/>
            <person name="Hoede C."/>
            <person name="Tenaillon O."/>
            <person name="Barbe V."/>
            <person name="Baeriswyl S."/>
            <person name="Bidet P."/>
            <person name="Bingen E."/>
            <person name="Bonacorsi S."/>
            <person name="Bouchier C."/>
            <person name="Bouvet O."/>
            <person name="Calteau A."/>
            <person name="Chiapello H."/>
            <person name="Clermont O."/>
            <person name="Cruveiller S."/>
            <person name="Danchin A."/>
            <person name="Diard M."/>
            <person name="Dossat C."/>
            <person name="Karoui M.E."/>
            <person name="Frapy E."/>
            <person name="Garry L."/>
            <person name="Ghigo J.M."/>
            <person name="Gilles A.M."/>
            <person name="Johnson J."/>
            <person name="Le Bouguenec C."/>
            <person name="Lescat M."/>
            <person name="Mangenot S."/>
            <person name="Martinez-Jehanne V."/>
            <person name="Matic I."/>
            <person name="Nassif X."/>
            <person name="Oztas S."/>
            <person name="Petit M.A."/>
            <person name="Pichon C."/>
            <person name="Rouy Z."/>
            <person name="Ruf C.S."/>
            <person name="Schneider D."/>
            <person name="Tourret J."/>
            <person name="Vacherie B."/>
            <person name="Vallenet D."/>
            <person name="Medigue C."/>
            <person name="Rocha E.P.C."/>
            <person name="Denamur E."/>
        </authorList>
    </citation>
    <scope>NUCLEOTIDE SEQUENCE [LARGE SCALE GENOMIC DNA]</scope>
    <source>
        <strain>ATCC 35469 / DSM 13698 / BCRC 15582 / CCUG 18766 / IAM 14443 / JCM 21226 / LMG 7866 / NBRC 102419 / NCTC 12128 / CDC 0568-73</strain>
    </source>
</reference>
<name>NUDC_ESCF3</name>
<keyword id="KW-0378">Hydrolase</keyword>
<keyword id="KW-0460">Magnesium</keyword>
<keyword id="KW-0464">Manganese</keyword>
<keyword id="KW-0479">Metal-binding</keyword>
<keyword id="KW-0520">NAD</keyword>
<keyword id="KW-0862">Zinc</keyword>
<feature type="chain" id="PRO_1000119465" description="NAD-capped RNA hydrolase NudC">
    <location>
        <begin position="1"/>
        <end position="257"/>
    </location>
</feature>
<feature type="domain" description="Nudix hydrolase" evidence="1">
    <location>
        <begin position="125"/>
        <end position="248"/>
    </location>
</feature>
<feature type="short sequence motif" description="Nudix box" evidence="1">
    <location>
        <begin position="159"/>
        <end position="180"/>
    </location>
</feature>
<feature type="binding site" evidence="1">
    <location>
        <position position="25"/>
    </location>
    <ligand>
        <name>substrate</name>
    </ligand>
</feature>
<feature type="binding site" evidence="1">
    <location>
        <position position="69"/>
    </location>
    <ligand>
        <name>substrate</name>
    </ligand>
</feature>
<feature type="binding site" evidence="1">
    <location>
        <position position="98"/>
    </location>
    <ligand>
        <name>Zn(2+)</name>
        <dbReference type="ChEBI" id="CHEBI:29105"/>
    </ligand>
</feature>
<feature type="binding site" evidence="1">
    <location>
        <position position="101"/>
    </location>
    <ligand>
        <name>Zn(2+)</name>
        <dbReference type="ChEBI" id="CHEBI:29105"/>
    </ligand>
</feature>
<feature type="binding site" evidence="1">
    <location>
        <position position="111"/>
    </location>
    <ligand>
        <name>substrate</name>
    </ligand>
</feature>
<feature type="binding site" evidence="1">
    <location>
        <position position="116"/>
    </location>
    <ligand>
        <name>Zn(2+)</name>
        <dbReference type="ChEBI" id="CHEBI:29105"/>
    </ligand>
</feature>
<feature type="binding site" evidence="1">
    <location>
        <position position="119"/>
    </location>
    <ligand>
        <name>Zn(2+)</name>
        <dbReference type="ChEBI" id="CHEBI:29105"/>
    </ligand>
</feature>
<feature type="binding site" evidence="1">
    <location>
        <position position="124"/>
    </location>
    <ligand>
        <name>substrate</name>
    </ligand>
</feature>
<feature type="binding site" evidence="1">
    <location>
        <position position="158"/>
    </location>
    <ligand>
        <name>a divalent metal cation</name>
        <dbReference type="ChEBI" id="CHEBI:60240"/>
        <label>1</label>
    </ligand>
</feature>
<feature type="binding site" evidence="1">
    <location>
        <position position="174"/>
    </location>
    <ligand>
        <name>a divalent metal cation</name>
        <dbReference type="ChEBI" id="CHEBI:60240"/>
        <label>2</label>
    </ligand>
</feature>
<feature type="binding site" evidence="1">
    <location>
        <position position="174"/>
    </location>
    <ligand>
        <name>a divalent metal cation</name>
        <dbReference type="ChEBI" id="CHEBI:60240"/>
        <label>3</label>
    </ligand>
</feature>
<feature type="binding site" evidence="1">
    <location>
        <position position="178"/>
    </location>
    <ligand>
        <name>a divalent metal cation</name>
        <dbReference type="ChEBI" id="CHEBI:60240"/>
        <label>1</label>
    </ligand>
</feature>
<feature type="binding site" evidence="1">
    <location>
        <position position="178"/>
    </location>
    <ligand>
        <name>a divalent metal cation</name>
        <dbReference type="ChEBI" id="CHEBI:60240"/>
        <label>3</label>
    </ligand>
</feature>
<feature type="binding site" evidence="1">
    <location>
        <begin position="192"/>
        <end position="199"/>
    </location>
    <ligand>
        <name>substrate</name>
    </ligand>
</feature>
<feature type="binding site" evidence="1">
    <location>
        <position position="219"/>
    </location>
    <ligand>
        <name>a divalent metal cation</name>
        <dbReference type="ChEBI" id="CHEBI:60240"/>
        <label>1</label>
    </ligand>
</feature>
<feature type="binding site" evidence="1">
    <location>
        <position position="219"/>
    </location>
    <ligand>
        <name>a divalent metal cation</name>
        <dbReference type="ChEBI" id="CHEBI:60240"/>
        <label>3</label>
    </ligand>
</feature>
<feature type="binding site" evidence="1">
    <location>
        <position position="241"/>
    </location>
    <ligand>
        <name>substrate</name>
    </ligand>
</feature>
<evidence type="ECO:0000255" key="1">
    <source>
        <dbReference type="HAMAP-Rule" id="MF_00297"/>
    </source>
</evidence>
<organism>
    <name type="scientific">Escherichia fergusonii (strain ATCC 35469 / DSM 13698 / CCUG 18766 / IAM 14443 / JCM 21226 / LMG 7866 / NBRC 102419 / NCTC 12128 / CDC 0568-73)</name>
    <dbReference type="NCBI Taxonomy" id="585054"/>
    <lineage>
        <taxon>Bacteria</taxon>
        <taxon>Pseudomonadati</taxon>
        <taxon>Pseudomonadota</taxon>
        <taxon>Gammaproteobacteria</taxon>
        <taxon>Enterobacterales</taxon>
        <taxon>Enterobacteriaceae</taxon>
        <taxon>Escherichia</taxon>
    </lineage>
</organism>
<comment type="function">
    <text evidence="1">mRNA decapping enzyme that specifically removes the nicotinamide adenine dinucleotide (NAD) cap from a subset of mRNAs by hydrolyzing the diphosphate linkage to produce nicotinamide mononucleotide (NMN) and 5' monophosphate mRNA. The NAD-cap is present at the 5'-end of some mRNAs and stabilizes RNA against 5'-processing. Has preference for mRNAs with a 5'-end purine. Catalyzes the hydrolysis of a broad range of dinucleotide pyrophosphates.</text>
</comment>
<comment type="catalytic activity">
    <reaction evidence="1">
        <text>a 5'-end NAD(+)-phospho-ribonucleoside in mRNA + H2O = a 5'-end phospho-adenosine-phospho-ribonucleoside in mRNA + beta-nicotinamide D-ribonucleotide + 2 H(+)</text>
        <dbReference type="Rhea" id="RHEA:60876"/>
        <dbReference type="Rhea" id="RHEA-COMP:15698"/>
        <dbReference type="Rhea" id="RHEA-COMP:15719"/>
        <dbReference type="ChEBI" id="CHEBI:14649"/>
        <dbReference type="ChEBI" id="CHEBI:15377"/>
        <dbReference type="ChEBI" id="CHEBI:15378"/>
        <dbReference type="ChEBI" id="CHEBI:144029"/>
        <dbReference type="ChEBI" id="CHEBI:144051"/>
    </reaction>
    <physiologicalReaction direction="left-to-right" evidence="1">
        <dbReference type="Rhea" id="RHEA:60877"/>
    </physiologicalReaction>
</comment>
<comment type="catalytic activity">
    <reaction evidence="1">
        <text>NAD(+) + H2O = beta-nicotinamide D-ribonucleotide + AMP + 2 H(+)</text>
        <dbReference type="Rhea" id="RHEA:11800"/>
        <dbReference type="ChEBI" id="CHEBI:14649"/>
        <dbReference type="ChEBI" id="CHEBI:15377"/>
        <dbReference type="ChEBI" id="CHEBI:15378"/>
        <dbReference type="ChEBI" id="CHEBI:57540"/>
        <dbReference type="ChEBI" id="CHEBI:456215"/>
        <dbReference type="EC" id="3.6.1.22"/>
    </reaction>
</comment>
<comment type="catalytic activity">
    <reaction evidence="1">
        <text>NADH + H2O = reduced beta-nicotinamide D-ribonucleotide + AMP + 2 H(+)</text>
        <dbReference type="Rhea" id="RHEA:48868"/>
        <dbReference type="ChEBI" id="CHEBI:15377"/>
        <dbReference type="ChEBI" id="CHEBI:15378"/>
        <dbReference type="ChEBI" id="CHEBI:57945"/>
        <dbReference type="ChEBI" id="CHEBI:90832"/>
        <dbReference type="ChEBI" id="CHEBI:456215"/>
        <dbReference type="EC" id="3.6.1.22"/>
    </reaction>
</comment>
<comment type="cofactor">
    <cofactor evidence="1">
        <name>Mg(2+)</name>
        <dbReference type="ChEBI" id="CHEBI:18420"/>
    </cofactor>
    <cofactor evidence="1">
        <name>Mn(2+)</name>
        <dbReference type="ChEBI" id="CHEBI:29035"/>
    </cofactor>
    <text evidence="1">Divalent metal cations. Mg(2+) or Mn(2+).</text>
</comment>
<comment type="cofactor">
    <cofactor evidence="1">
        <name>Zn(2+)</name>
        <dbReference type="ChEBI" id="CHEBI:29105"/>
    </cofactor>
    <text evidence="1">Binds 1 zinc ion per subunit.</text>
</comment>
<comment type="subunit">
    <text evidence="1">Homodimer.</text>
</comment>
<comment type="similarity">
    <text evidence="1">Belongs to the Nudix hydrolase family. NudC subfamily.</text>
</comment>
<sequence>MDRIIEKLDHGWWVVSHEQKLWLPKGELPYGEAANFDLVGQRALQIGEWQGEPVWLVQQQRRHDMGSVRQVIDLDVRLFQLAGRGVQLAEFYRSHKYCGYCGHEMYPSKTEWAMLCSHCRERYYPQIAPCIIVAIRRDDSILLAQHTRHRNGVHTVLAGFVEVGETLEQAVAREVMEESGIKVKNLRYVTSQPWPFPQSLMTAFMAEYDSGDIVIDPKELLEANWYRYDDLPLLPPPGTVARRLIEDTVAMCRAEYE</sequence>
<dbReference type="EC" id="3.6.1.-" evidence="1"/>
<dbReference type="EC" id="3.6.1.22" evidence="1"/>
<dbReference type="EMBL" id="CU928158">
    <property type="protein sequence ID" value="CAQ91209.1"/>
    <property type="molecule type" value="Genomic_DNA"/>
</dbReference>
<dbReference type="RefSeq" id="WP_000373945.1">
    <property type="nucleotide sequence ID" value="NC_011740.1"/>
</dbReference>
<dbReference type="SMR" id="B7LUK6"/>
<dbReference type="GeneID" id="75059362"/>
<dbReference type="KEGG" id="efe:EFER_3758"/>
<dbReference type="HOGENOM" id="CLU_037162_0_1_6"/>
<dbReference type="OrthoDB" id="9791656at2"/>
<dbReference type="Proteomes" id="UP000000745">
    <property type="component" value="Chromosome"/>
</dbReference>
<dbReference type="GO" id="GO:0005829">
    <property type="term" value="C:cytosol"/>
    <property type="evidence" value="ECO:0007669"/>
    <property type="project" value="TreeGrafter"/>
</dbReference>
<dbReference type="GO" id="GO:0000287">
    <property type="term" value="F:magnesium ion binding"/>
    <property type="evidence" value="ECO:0007669"/>
    <property type="project" value="UniProtKB-UniRule"/>
</dbReference>
<dbReference type="GO" id="GO:0030145">
    <property type="term" value="F:manganese ion binding"/>
    <property type="evidence" value="ECO:0007669"/>
    <property type="project" value="UniProtKB-UniRule"/>
</dbReference>
<dbReference type="GO" id="GO:0000210">
    <property type="term" value="F:NAD+ diphosphatase activity"/>
    <property type="evidence" value="ECO:0007669"/>
    <property type="project" value="UniProtKB-UniRule"/>
</dbReference>
<dbReference type="GO" id="GO:0035529">
    <property type="term" value="F:NADH pyrophosphatase activity"/>
    <property type="evidence" value="ECO:0007669"/>
    <property type="project" value="TreeGrafter"/>
</dbReference>
<dbReference type="GO" id="GO:0110153">
    <property type="term" value="F:RNA NAD-cap (NMN-forming) hydrolase activity"/>
    <property type="evidence" value="ECO:0007669"/>
    <property type="project" value="RHEA"/>
</dbReference>
<dbReference type="GO" id="GO:0008270">
    <property type="term" value="F:zinc ion binding"/>
    <property type="evidence" value="ECO:0007669"/>
    <property type="project" value="UniProtKB-UniRule"/>
</dbReference>
<dbReference type="GO" id="GO:0019677">
    <property type="term" value="P:NAD catabolic process"/>
    <property type="evidence" value="ECO:0007669"/>
    <property type="project" value="TreeGrafter"/>
</dbReference>
<dbReference type="GO" id="GO:0006734">
    <property type="term" value="P:NADH metabolic process"/>
    <property type="evidence" value="ECO:0007669"/>
    <property type="project" value="TreeGrafter"/>
</dbReference>
<dbReference type="GO" id="GO:0006742">
    <property type="term" value="P:NADP catabolic process"/>
    <property type="evidence" value="ECO:0007669"/>
    <property type="project" value="TreeGrafter"/>
</dbReference>
<dbReference type="CDD" id="cd03429">
    <property type="entry name" value="NUDIX_NADH_pyrophosphatase_Nudt13"/>
    <property type="match status" value="1"/>
</dbReference>
<dbReference type="FunFam" id="3.90.79.10:FF:000004">
    <property type="entry name" value="NADH pyrophosphatase"/>
    <property type="match status" value="1"/>
</dbReference>
<dbReference type="FunFam" id="3.90.79.20:FF:000001">
    <property type="entry name" value="NADH pyrophosphatase"/>
    <property type="match status" value="1"/>
</dbReference>
<dbReference type="Gene3D" id="3.90.79.20">
    <property type="match status" value="1"/>
</dbReference>
<dbReference type="Gene3D" id="3.90.79.10">
    <property type="entry name" value="Nucleoside Triphosphate Pyrophosphohydrolase"/>
    <property type="match status" value="1"/>
</dbReference>
<dbReference type="HAMAP" id="MF_00297">
    <property type="entry name" value="Nudix_NudC"/>
    <property type="match status" value="1"/>
</dbReference>
<dbReference type="InterPro" id="IPR050241">
    <property type="entry name" value="NAD-cap_RNA_hydrolase_NudC"/>
</dbReference>
<dbReference type="InterPro" id="IPR049734">
    <property type="entry name" value="NudC-like_C"/>
</dbReference>
<dbReference type="InterPro" id="IPR015797">
    <property type="entry name" value="NUDIX_hydrolase-like_dom_sf"/>
</dbReference>
<dbReference type="InterPro" id="IPR020084">
    <property type="entry name" value="NUDIX_hydrolase_CS"/>
</dbReference>
<dbReference type="InterPro" id="IPR000086">
    <property type="entry name" value="NUDIX_hydrolase_dom"/>
</dbReference>
<dbReference type="InterPro" id="IPR022925">
    <property type="entry name" value="RNA_Hydrolase_NudC"/>
</dbReference>
<dbReference type="InterPro" id="IPR015376">
    <property type="entry name" value="Znr_NADH_PPase"/>
</dbReference>
<dbReference type="NCBIfam" id="NF001299">
    <property type="entry name" value="PRK00241.1"/>
    <property type="match status" value="1"/>
</dbReference>
<dbReference type="PANTHER" id="PTHR42904:SF6">
    <property type="entry name" value="NAD-CAPPED RNA HYDROLASE NUDT12"/>
    <property type="match status" value="1"/>
</dbReference>
<dbReference type="PANTHER" id="PTHR42904">
    <property type="entry name" value="NUDIX HYDROLASE, NUDC SUBFAMILY"/>
    <property type="match status" value="1"/>
</dbReference>
<dbReference type="Pfam" id="PF00293">
    <property type="entry name" value="NUDIX"/>
    <property type="match status" value="1"/>
</dbReference>
<dbReference type="Pfam" id="PF09297">
    <property type="entry name" value="Zn_ribbon_NUD"/>
    <property type="match status" value="1"/>
</dbReference>
<dbReference type="SUPFAM" id="SSF55811">
    <property type="entry name" value="Nudix"/>
    <property type="match status" value="2"/>
</dbReference>
<dbReference type="PROSITE" id="PS51462">
    <property type="entry name" value="NUDIX"/>
    <property type="match status" value="1"/>
</dbReference>
<dbReference type="PROSITE" id="PS00893">
    <property type="entry name" value="NUDIX_BOX"/>
    <property type="match status" value="1"/>
</dbReference>
<accession>B7LUK6</accession>
<gene>
    <name evidence="1" type="primary">nudC</name>
    <name type="ordered locus">EFER_3758</name>
</gene>
<proteinExistence type="inferred from homology"/>
<protein>
    <recommendedName>
        <fullName evidence="1">NAD-capped RNA hydrolase NudC</fullName>
        <shortName evidence="1">DeNADding enzyme NudC</shortName>
        <ecNumber evidence="1">3.6.1.-</ecNumber>
    </recommendedName>
    <alternativeName>
        <fullName evidence="1">NADH pyrophosphatase</fullName>
        <ecNumber evidence="1">3.6.1.22</ecNumber>
    </alternativeName>
</protein>